<comment type="function">
    <text evidence="1">IGPS catalyzes the conversion of PRFAR and glutamine to IGP, AICAR and glutamate. The HisF subunit catalyzes the cyclization activity that produces IGP and AICAR from PRFAR using the ammonia provided by the HisH subunit.</text>
</comment>
<comment type="catalytic activity">
    <reaction evidence="1">
        <text>5-[(5-phospho-1-deoxy-D-ribulos-1-ylimino)methylamino]-1-(5-phospho-beta-D-ribosyl)imidazole-4-carboxamide + L-glutamine = D-erythro-1-(imidazol-4-yl)glycerol 3-phosphate + 5-amino-1-(5-phospho-beta-D-ribosyl)imidazole-4-carboxamide + L-glutamate + H(+)</text>
        <dbReference type="Rhea" id="RHEA:24793"/>
        <dbReference type="ChEBI" id="CHEBI:15378"/>
        <dbReference type="ChEBI" id="CHEBI:29985"/>
        <dbReference type="ChEBI" id="CHEBI:58278"/>
        <dbReference type="ChEBI" id="CHEBI:58359"/>
        <dbReference type="ChEBI" id="CHEBI:58475"/>
        <dbReference type="ChEBI" id="CHEBI:58525"/>
        <dbReference type="EC" id="4.3.2.10"/>
    </reaction>
</comment>
<comment type="pathway">
    <text evidence="1">Amino-acid biosynthesis; L-histidine biosynthesis; L-histidine from 5-phospho-alpha-D-ribose 1-diphosphate: step 5/9.</text>
</comment>
<comment type="subunit">
    <text evidence="1">Heterodimer of HisH and HisF.</text>
</comment>
<comment type="subcellular location">
    <subcellularLocation>
        <location evidence="1">Cytoplasm</location>
    </subcellularLocation>
</comment>
<comment type="similarity">
    <text evidence="1">Belongs to the HisA/HisF family.</text>
</comment>
<dbReference type="EC" id="4.3.2.10" evidence="1"/>
<dbReference type="EMBL" id="CP001337">
    <property type="protein sequence ID" value="ACL24781.1"/>
    <property type="molecule type" value="Genomic_DNA"/>
</dbReference>
<dbReference type="RefSeq" id="WP_015940640.1">
    <property type="nucleotide sequence ID" value="NC_011831.1"/>
</dbReference>
<dbReference type="SMR" id="B8GBF3"/>
<dbReference type="STRING" id="326427.Cagg_1886"/>
<dbReference type="KEGG" id="cag:Cagg_1886"/>
<dbReference type="eggNOG" id="COG0107">
    <property type="taxonomic scope" value="Bacteria"/>
</dbReference>
<dbReference type="HOGENOM" id="CLU_048577_4_0_0"/>
<dbReference type="OrthoDB" id="9781903at2"/>
<dbReference type="UniPathway" id="UPA00031">
    <property type="reaction ID" value="UER00010"/>
</dbReference>
<dbReference type="Proteomes" id="UP000002508">
    <property type="component" value="Chromosome"/>
</dbReference>
<dbReference type="GO" id="GO:0005737">
    <property type="term" value="C:cytoplasm"/>
    <property type="evidence" value="ECO:0007669"/>
    <property type="project" value="UniProtKB-SubCell"/>
</dbReference>
<dbReference type="GO" id="GO:0000107">
    <property type="term" value="F:imidazoleglycerol-phosphate synthase activity"/>
    <property type="evidence" value="ECO:0007669"/>
    <property type="project" value="UniProtKB-UniRule"/>
</dbReference>
<dbReference type="GO" id="GO:0016829">
    <property type="term" value="F:lyase activity"/>
    <property type="evidence" value="ECO:0007669"/>
    <property type="project" value="UniProtKB-KW"/>
</dbReference>
<dbReference type="GO" id="GO:0000105">
    <property type="term" value="P:L-histidine biosynthetic process"/>
    <property type="evidence" value="ECO:0007669"/>
    <property type="project" value="UniProtKB-UniRule"/>
</dbReference>
<dbReference type="CDD" id="cd04731">
    <property type="entry name" value="HisF"/>
    <property type="match status" value="1"/>
</dbReference>
<dbReference type="FunFam" id="3.20.20.70:FF:000006">
    <property type="entry name" value="Imidazole glycerol phosphate synthase subunit HisF"/>
    <property type="match status" value="1"/>
</dbReference>
<dbReference type="Gene3D" id="3.20.20.70">
    <property type="entry name" value="Aldolase class I"/>
    <property type="match status" value="1"/>
</dbReference>
<dbReference type="HAMAP" id="MF_01013">
    <property type="entry name" value="HisF"/>
    <property type="match status" value="1"/>
</dbReference>
<dbReference type="InterPro" id="IPR013785">
    <property type="entry name" value="Aldolase_TIM"/>
</dbReference>
<dbReference type="InterPro" id="IPR006062">
    <property type="entry name" value="His_biosynth"/>
</dbReference>
<dbReference type="InterPro" id="IPR004651">
    <property type="entry name" value="HisF"/>
</dbReference>
<dbReference type="InterPro" id="IPR050064">
    <property type="entry name" value="IGPS_HisA/HisF"/>
</dbReference>
<dbReference type="InterPro" id="IPR011060">
    <property type="entry name" value="RibuloseP-bd_barrel"/>
</dbReference>
<dbReference type="NCBIfam" id="TIGR00735">
    <property type="entry name" value="hisF"/>
    <property type="match status" value="1"/>
</dbReference>
<dbReference type="PANTHER" id="PTHR21235:SF2">
    <property type="entry name" value="IMIDAZOLE GLYCEROL PHOSPHATE SYNTHASE HISHF"/>
    <property type="match status" value="1"/>
</dbReference>
<dbReference type="PANTHER" id="PTHR21235">
    <property type="entry name" value="IMIDAZOLE GLYCEROL PHOSPHATE SYNTHASE SUBUNIT HISF/H IGP SYNTHASE SUBUNIT HISF/H"/>
    <property type="match status" value="1"/>
</dbReference>
<dbReference type="Pfam" id="PF00977">
    <property type="entry name" value="His_biosynth"/>
    <property type="match status" value="1"/>
</dbReference>
<dbReference type="SUPFAM" id="SSF51366">
    <property type="entry name" value="Ribulose-phoshate binding barrel"/>
    <property type="match status" value="1"/>
</dbReference>
<reference key="1">
    <citation type="submission" date="2008-12" db="EMBL/GenBank/DDBJ databases">
        <title>Complete sequence of Chloroflexus aggregans DSM 9485.</title>
        <authorList>
            <consortium name="US DOE Joint Genome Institute"/>
            <person name="Lucas S."/>
            <person name="Copeland A."/>
            <person name="Lapidus A."/>
            <person name="Glavina del Rio T."/>
            <person name="Dalin E."/>
            <person name="Tice H."/>
            <person name="Pitluck S."/>
            <person name="Foster B."/>
            <person name="Larimer F."/>
            <person name="Land M."/>
            <person name="Hauser L."/>
            <person name="Kyrpides N."/>
            <person name="Mikhailova N."/>
            <person name="Bryant D.A."/>
            <person name="Richardson P."/>
        </authorList>
    </citation>
    <scope>NUCLEOTIDE SEQUENCE [LARGE SCALE GENOMIC DNA]</scope>
    <source>
        <strain>MD-66 / DSM 9485</strain>
    </source>
</reference>
<sequence length="270" mass="28533">MLTRRIIPCLDVKAGRVVKGVKFLNHRDAGDPVALAAAYNAAGADELVFYDITASSDERAIMVEVVERTAAEVFIPLTVGGGLRSVEDMYRMLRAGADKVSLNTAAVYNPHLIAEGARRFGSQCIVLSVDAKRVNAPGEPPRWEVFTHTGANPRPTGLDAIEWIKRGIDLGAGEICINSMDADGARTGYDLELLQAITAISPVPVIASGGAGSPADMYRGIVEGGADAVLAASIFHFGDYSIADVKRYLAERGVPVRQTFGSEVGTSTGA</sequence>
<proteinExistence type="inferred from homology"/>
<name>HIS6_CHLAD</name>
<gene>
    <name evidence="1" type="primary">hisF</name>
    <name type="ordered locus">Cagg_1886</name>
</gene>
<accession>B8GBF3</accession>
<evidence type="ECO:0000255" key="1">
    <source>
        <dbReference type="HAMAP-Rule" id="MF_01013"/>
    </source>
</evidence>
<organism>
    <name type="scientific">Chloroflexus aggregans (strain MD-66 / DSM 9485)</name>
    <dbReference type="NCBI Taxonomy" id="326427"/>
    <lineage>
        <taxon>Bacteria</taxon>
        <taxon>Bacillati</taxon>
        <taxon>Chloroflexota</taxon>
        <taxon>Chloroflexia</taxon>
        <taxon>Chloroflexales</taxon>
        <taxon>Chloroflexineae</taxon>
        <taxon>Chloroflexaceae</taxon>
        <taxon>Chloroflexus</taxon>
    </lineage>
</organism>
<keyword id="KW-0028">Amino-acid biosynthesis</keyword>
<keyword id="KW-0963">Cytoplasm</keyword>
<keyword id="KW-0368">Histidine biosynthesis</keyword>
<keyword id="KW-0456">Lyase</keyword>
<feature type="chain" id="PRO_1000148911" description="Imidazole glycerol phosphate synthase subunit HisF">
    <location>
        <begin position="1"/>
        <end position="270"/>
    </location>
</feature>
<feature type="active site" evidence="1">
    <location>
        <position position="11"/>
    </location>
</feature>
<feature type="active site" evidence="1">
    <location>
        <position position="130"/>
    </location>
</feature>
<protein>
    <recommendedName>
        <fullName evidence="1">Imidazole glycerol phosphate synthase subunit HisF</fullName>
        <ecNumber evidence="1">4.3.2.10</ecNumber>
    </recommendedName>
    <alternativeName>
        <fullName evidence="1">IGP synthase cyclase subunit</fullName>
    </alternativeName>
    <alternativeName>
        <fullName evidence="1">IGP synthase subunit HisF</fullName>
    </alternativeName>
    <alternativeName>
        <fullName evidence="1">ImGP synthase subunit HisF</fullName>
        <shortName evidence="1">IGPS subunit HisF</shortName>
    </alternativeName>
</protein>